<keyword id="KW-0963">Cytoplasm</keyword>
<keyword id="KW-0413">Isomerase</keyword>
<proteinExistence type="inferred from homology"/>
<comment type="subunit">
    <text evidence="1">Homodimer.</text>
</comment>
<comment type="subcellular location">
    <subcellularLocation>
        <location evidence="1">Cytoplasm</location>
    </subcellularLocation>
</comment>
<comment type="similarity">
    <text evidence="1">Belongs to the 4-oxalocrotonate tautomerase family. PptA subfamily.</text>
</comment>
<dbReference type="EC" id="5.3.2.-" evidence="1"/>
<dbReference type="EMBL" id="CP000653">
    <property type="protein sequence ID" value="ABP60759.1"/>
    <property type="molecule type" value="Genomic_DNA"/>
</dbReference>
<dbReference type="RefSeq" id="WP_012017474.1">
    <property type="nucleotide sequence ID" value="NC_009436.1"/>
</dbReference>
<dbReference type="SMR" id="A4WAM9"/>
<dbReference type="STRING" id="399742.Ent638_2084"/>
<dbReference type="GeneID" id="97601769"/>
<dbReference type="KEGG" id="ent:Ent638_2084"/>
<dbReference type="eggNOG" id="COG1942">
    <property type="taxonomic scope" value="Bacteria"/>
</dbReference>
<dbReference type="HOGENOM" id="CLU_183611_0_1_6"/>
<dbReference type="OrthoDB" id="3395834at2"/>
<dbReference type="Proteomes" id="UP000000230">
    <property type="component" value="Chromosome"/>
</dbReference>
<dbReference type="GO" id="GO:0005737">
    <property type="term" value="C:cytoplasm"/>
    <property type="evidence" value="ECO:0007669"/>
    <property type="project" value="UniProtKB-SubCell"/>
</dbReference>
<dbReference type="GO" id="GO:0016862">
    <property type="term" value="F:intramolecular oxidoreductase activity, interconverting keto- and enol-groups"/>
    <property type="evidence" value="ECO:0007669"/>
    <property type="project" value="UniProtKB-UniRule"/>
</dbReference>
<dbReference type="Gene3D" id="3.30.429.10">
    <property type="entry name" value="Macrophage Migration Inhibitory Factor"/>
    <property type="match status" value="1"/>
</dbReference>
<dbReference type="HAMAP" id="MF_00718">
    <property type="entry name" value="Tautomerase_PptA"/>
    <property type="match status" value="1"/>
</dbReference>
<dbReference type="InterPro" id="IPR004370">
    <property type="entry name" value="4-OT-like_dom"/>
</dbReference>
<dbReference type="InterPro" id="IPR014347">
    <property type="entry name" value="Tautomerase/MIF_sf"/>
</dbReference>
<dbReference type="InterPro" id="IPR017284">
    <property type="entry name" value="Tautomerase_PptA"/>
</dbReference>
<dbReference type="NCBIfam" id="NF002324">
    <property type="entry name" value="PRK01271.1"/>
    <property type="match status" value="1"/>
</dbReference>
<dbReference type="Pfam" id="PF01361">
    <property type="entry name" value="Tautomerase"/>
    <property type="match status" value="1"/>
</dbReference>
<dbReference type="PIRSF" id="PIRSF037799">
    <property type="entry name" value="Tautomer_YdcE_prd"/>
    <property type="match status" value="1"/>
</dbReference>
<dbReference type="SUPFAM" id="SSF55331">
    <property type="entry name" value="Tautomerase/MIF"/>
    <property type="match status" value="1"/>
</dbReference>
<organism>
    <name type="scientific">Enterobacter sp. (strain 638)</name>
    <dbReference type="NCBI Taxonomy" id="399742"/>
    <lineage>
        <taxon>Bacteria</taxon>
        <taxon>Pseudomonadati</taxon>
        <taxon>Pseudomonadota</taxon>
        <taxon>Gammaproteobacteria</taxon>
        <taxon>Enterobacterales</taxon>
        <taxon>Enterobacteriaceae</taxon>
        <taxon>Enterobacter</taxon>
    </lineage>
</organism>
<gene>
    <name evidence="1" type="primary">pptA</name>
    <name type="ordered locus">Ent638_2084</name>
</gene>
<sequence>MPHVDIKCFPRDLNDEQKTALAADIAEVIIRHFNSKDSSVSVALNQVQQEDWKAQVWDTEIGPKLDELIKKPGYSM</sequence>
<name>PPTA_ENT38</name>
<reference key="1">
    <citation type="journal article" date="2010" name="PLoS Genet.">
        <title>Genome sequence of the plant growth promoting endophytic bacterium Enterobacter sp. 638.</title>
        <authorList>
            <person name="Taghavi S."/>
            <person name="van der Lelie D."/>
            <person name="Hoffman A."/>
            <person name="Zhang Y.B."/>
            <person name="Walla M.D."/>
            <person name="Vangronsveld J."/>
            <person name="Newman L."/>
            <person name="Monchy S."/>
        </authorList>
    </citation>
    <scope>NUCLEOTIDE SEQUENCE [LARGE SCALE GENOMIC DNA]</scope>
    <source>
        <strain>638</strain>
    </source>
</reference>
<feature type="initiator methionine" description="Removed" evidence="1">
    <location>
        <position position="1"/>
    </location>
</feature>
<feature type="chain" id="PRO_0000348338" description="Tautomerase PptA">
    <location>
        <begin position="2"/>
        <end position="76"/>
    </location>
</feature>
<feature type="active site" description="Proton acceptor; via imino nitrogen" evidence="1">
    <location>
        <position position="2"/>
    </location>
</feature>
<evidence type="ECO:0000255" key="1">
    <source>
        <dbReference type="HAMAP-Rule" id="MF_00718"/>
    </source>
</evidence>
<accession>A4WAM9</accession>
<protein>
    <recommendedName>
        <fullName evidence="1">Tautomerase PptA</fullName>
        <ecNumber evidence="1">5.3.2.-</ecNumber>
    </recommendedName>
</protein>